<organism>
    <name type="scientific">Homo sapiens</name>
    <name type="common">Human</name>
    <dbReference type="NCBI Taxonomy" id="9606"/>
    <lineage>
        <taxon>Eukaryota</taxon>
        <taxon>Metazoa</taxon>
        <taxon>Chordata</taxon>
        <taxon>Craniata</taxon>
        <taxon>Vertebrata</taxon>
        <taxon>Euteleostomi</taxon>
        <taxon>Mammalia</taxon>
        <taxon>Eutheria</taxon>
        <taxon>Euarchontoglires</taxon>
        <taxon>Primates</taxon>
        <taxon>Haplorrhini</taxon>
        <taxon>Catarrhini</taxon>
        <taxon>Hominidae</taxon>
        <taxon>Homo</taxon>
    </lineage>
</organism>
<keyword id="KW-0002">3D-structure</keyword>
<keyword id="KW-0031">Aminopeptidase</keyword>
<keyword id="KW-0378">Hydrolase</keyword>
<keyword id="KW-0479">Metal-binding</keyword>
<keyword id="KW-0496">Mitochondrion</keyword>
<keyword id="KW-0645">Protease</keyword>
<keyword id="KW-1267">Proteomics identification</keyword>
<keyword id="KW-1185">Reference proteome</keyword>
<keyword id="KW-0809">Transit peptide</keyword>
<sequence>MAAPSGVHLLVRRGSHRIFSSPLNHIYLHKQSSSQQRRNFFFRRQRDISHSIVLPAAVSSAHPVPKHIKKPDYVTTGIVPDWGDSIEVKNEDQIQGLHQACQLARHVLLLAGKSLKVDMTTEEIDALVHREIISHNAYPSPLGYGGFPKSVCTSVNNVLCHGIPDSRPLQDGDIINIDVTVYYNGYHGDTSETFLVGNVDECGKKLVEVARRCRDEAIAACRAGAPFSVIGNTISHITHQNGFQVCPHFVGHGIGSYFHGHPEIWHHANDSDLPMEEGMAFTIEPIITEGSPEFKVLEDAWTVVSLDNQRSAQFEHTVLITSRGAQILTKLPHEA</sequence>
<accession>Q6UB28</accession>
<accession>Q1WNX3</accession>
<gene>
    <name type="primary">METAP1D</name>
    <name type="synonym">MAP1D</name>
</gene>
<protein>
    <recommendedName>
        <fullName evidence="1">Methionine aminopeptidase 1D, mitochondrial</fullName>
        <shortName evidence="1">MAP 1D</shortName>
        <shortName evidence="1">MetAP 1D</shortName>
        <ecNumber evidence="1">3.4.11.18</ecNumber>
    </recommendedName>
    <alternativeName>
        <fullName>Methionyl aminopeptidase type 1D, mitochondrial</fullName>
    </alternativeName>
    <alternativeName>
        <fullName evidence="1">Peptidase M 1D</fullName>
    </alternativeName>
</protein>
<reference key="1">
    <citation type="journal article" date="2003" name="J. Biol. Chem.">
        <title>An unusual peptide deformylase features in the human mitochondrial N-terminal methionine excision pathway.</title>
        <authorList>
            <person name="Serero A."/>
            <person name="Giglione C."/>
            <person name="Sardini A."/>
            <person name="Martinez-Sanz J."/>
            <person name="Meinnel T."/>
        </authorList>
    </citation>
    <scope>NUCLEOTIDE SEQUENCE [MRNA]</scope>
    <scope>SUBCELLULAR LOCATION</scope>
</reference>
<reference key="2">
    <citation type="journal article" date="2006" name="Oncogene">
        <title>MAP1D, a novel methionine aminopeptidase family member is overexpressed in colon cancer.</title>
        <authorList>
            <person name="Leszczyniecka M."/>
            <person name="Bhatia U."/>
            <person name="Cueto M."/>
            <person name="Nirmala N.R."/>
            <person name="Towbin H."/>
            <person name="Vattay A."/>
            <person name="Wang B."/>
            <person name="Zabludoff S."/>
            <person name="Phillips P.E."/>
        </authorList>
    </citation>
    <scope>NUCLEOTIDE SEQUENCE [MRNA]</scope>
    <scope>FUNCTION</scope>
    <scope>TISSUE SPECIFICITY</scope>
    <scope>VARIANT VAL-14</scope>
</reference>
<reference key="3">
    <citation type="submission" date="2005-09" db="EMBL/GenBank/DDBJ databases">
        <authorList>
            <person name="Mural R.J."/>
            <person name="Istrail S."/>
            <person name="Sutton G.G."/>
            <person name="Florea L."/>
            <person name="Halpern A.L."/>
            <person name="Mobarry C.M."/>
            <person name="Lippert R."/>
            <person name="Walenz B."/>
            <person name="Shatkay H."/>
            <person name="Dew I."/>
            <person name="Miller J.R."/>
            <person name="Flanigan M.J."/>
            <person name="Edwards N.J."/>
            <person name="Bolanos R."/>
            <person name="Fasulo D."/>
            <person name="Halldorsson B.V."/>
            <person name="Hannenhalli S."/>
            <person name="Turner R."/>
            <person name="Yooseph S."/>
            <person name="Lu F."/>
            <person name="Nusskern D.R."/>
            <person name="Shue B.C."/>
            <person name="Zheng X.H."/>
            <person name="Zhong F."/>
            <person name="Delcher A.L."/>
            <person name="Huson D.H."/>
            <person name="Kravitz S.A."/>
            <person name="Mouchard L."/>
            <person name="Reinert K."/>
            <person name="Remington K.A."/>
            <person name="Clark A.G."/>
            <person name="Waterman M.S."/>
            <person name="Eichler E.E."/>
            <person name="Adams M.D."/>
            <person name="Hunkapiller M.W."/>
            <person name="Myers E.W."/>
            <person name="Venter J.C."/>
        </authorList>
    </citation>
    <scope>NUCLEOTIDE SEQUENCE [LARGE SCALE GENOMIC DNA]</scope>
</reference>
<reference key="4">
    <citation type="journal article" date="2004" name="Genome Res.">
        <title>The status, quality, and expansion of the NIH full-length cDNA project: the Mammalian Gene Collection (MGC).</title>
        <authorList>
            <consortium name="The MGC Project Team"/>
        </authorList>
    </citation>
    <scope>NUCLEOTIDE SEQUENCE [LARGE SCALE MRNA]</scope>
    <source>
        <tissue>Brain</tissue>
    </source>
</reference>
<reference key="5">
    <citation type="journal article" date="2007" name="Biochemistry">
        <title>Kinetic and mutational studies of the number of interacting divalent cations required by bacterial and human methionine aminopeptidases.</title>
        <authorList>
            <person name="Hu X.V."/>
            <person name="Chen X."/>
            <person name="Han K.C."/>
            <person name="Mildvan A.S."/>
            <person name="Liu J.O."/>
        </authorList>
    </citation>
    <scope>COFACTOR</scope>
    <scope>BIOPHYSICOCHEMICAL PROPERTIES</scope>
</reference>
<reference key="6">
    <citation type="journal article" date="2015" name="Proteomics">
        <title>N-terminome analysis of the human mitochondrial proteome.</title>
        <authorList>
            <person name="Vaca Jacome A.S."/>
            <person name="Rabilloud T."/>
            <person name="Schaeffer-Reiss C."/>
            <person name="Rompais M."/>
            <person name="Ayoub D."/>
            <person name="Lane L."/>
            <person name="Bairoch A."/>
            <person name="Van Dorsselaer A."/>
            <person name="Carapito C."/>
        </authorList>
    </citation>
    <scope>IDENTIFICATION BY MASS SPECTROMETRY [LARGE SCALE ANALYSIS]</scope>
</reference>
<comment type="function">
    <text evidence="1 3">Removes the N-terminal methionine from nascent proteins. The N-terminal methionine is often cleaved when the second residue in the primary sequence is small and uncharged (Met-Ala-, Cys, Gly, Pro, Ser, Thr, or Val). Requires deformylation of the N(alpha)-formylated initiator methionine before it can be hydrolyzed (By similarity). May play a role in colon tumorigenesis.</text>
</comment>
<comment type="catalytic activity">
    <reaction evidence="1">
        <text>Release of N-terminal amino acids, preferentially methionine, from peptides and arylamides.</text>
        <dbReference type="EC" id="3.4.11.18"/>
    </reaction>
</comment>
<comment type="cofactor">
    <cofactor evidence="1">
        <name>Co(2+)</name>
        <dbReference type="ChEBI" id="CHEBI:48828"/>
    </cofactor>
    <cofactor evidence="1">
        <name>Zn(2+)</name>
        <dbReference type="ChEBI" id="CHEBI:29105"/>
    </cofactor>
    <cofactor evidence="1">
        <name>Mn(2+)</name>
        <dbReference type="ChEBI" id="CHEBI:29035"/>
    </cofactor>
    <cofactor evidence="1">
        <name>Fe(2+)</name>
        <dbReference type="ChEBI" id="CHEBI:29033"/>
    </cofactor>
    <text evidence="1">Binds 2 divalent metal cations per subunit. Has a high-affinity and a low affinity metal-binding site. The true nature of the physiological cofactor is under debate. The enzyme is active with cobalt, zinc, manganese or divalent iron ions. Most likely, methionine aminopeptidases function as mononuclear Fe(2+)-metalloproteases under physiological conditions, and the catalytically relevant metal-binding site has been assigned to the histidine-containing high-affinity site.</text>
</comment>
<comment type="biophysicochemical properties">
    <kinetics>
        <KM evidence="4">573 uM for Met-pro-p-nitroanilide (at pH 8)</KM>
    </kinetics>
    <phDependence>
        <text evidence="4">Optimum pH is 7.5-8.0.</text>
    </phDependence>
</comment>
<comment type="interaction">
    <interactant intactId="EBI-11056820">
        <id>Q6UB28</id>
    </interactant>
    <interactant intactId="EBI-54789391">
        <id>Q2TBC4</id>
        <label>PRICKLE4</label>
    </interactant>
    <organismsDiffer>false</organismsDiffer>
    <experiments>2</experiments>
</comment>
<comment type="subcellular location">
    <subcellularLocation>
        <location evidence="1 2">Mitochondrion</location>
    </subcellularLocation>
</comment>
<comment type="tissue specificity">
    <text evidence="3">Overexpressed in colon cancer cell lines and colon tumors as compared to normal tissues (at protein level).</text>
</comment>
<comment type="similarity">
    <text evidence="1">Belongs to the peptidase M24A family. Methionine aminopeptidase type 1 subfamily.</text>
</comment>
<comment type="caution">
    <text evidence="5">It is uncertain whether Met-1 or a Met upstream of this sequence is the initiator.</text>
</comment>
<comment type="sequence caution" evidence="5">
    <conflict type="erroneous initiation">
        <sequence resource="EMBL-CDS" id="AAY55948"/>
    </conflict>
</comment>
<evidence type="ECO:0000255" key="1">
    <source>
        <dbReference type="HAMAP-Rule" id="MF_03174"/>
    </source>
</evidence>
<evidence type="ECO:0000269" key="2">
    <source>
    </source>
</evidence>
<evidence type="ECO:0000269" key="3">
    <source>
    </source>
</evidence>
<evidence type="ECO:0000269" key="4">
    <source>
    </source>
</evidence>
<evidence type="ECO:0000305" key="5"/>
<name>MAP12_HUMAN</name>
<proteinExistence type="evidence at protein level"/>
<feature type="transit peptide" description="Mitochondrion" evidence="1">
    <location>
        <begin position="1"/>
        <end position="19"/>
    </location>
</feature>
<feature type="chain" id="PRO_0000314126" description="Methionine aminopeptidase 1D, mitochondrial">
    <location>
        <begin position="20"/>
        <end position="335"/>
    </location>
</feature>
<feature type="binding site" evidence="1">
    <location>
        <position position="161"/>
    </location>
    <ligand>
        <name>substrate</name>
    </ligand>
</feature>
<feature type="binding site" evidence="1">
    <location>
        <position position="178"/>
    </location>
    <ligand>
        <name>a divalent metal cation</name>
        <dbReference type="ChEBI" id="CHEBI:60240"/>
        <label>1</label>
    </ligand>
</feature>
<feature type="binding site" evidence="1">
    <location>
        <position position="189"/>
    </location>
    <ligand>
        <name>a divalent metal cation</name>
        <dbReference type="ChEBI" id="CHEBI:60240"/>
        <label>1</label>
    </ligand>
</feature>
<feature type="binding site" evidence="1">
    <location>
        <position position="189"/>
    </location>
    <ligand>
        <name>a divalent metal cation</name>
        <dbReference type="ChEBI" id="CHEBI:60240"/>
        <label>2</label>
        <note>catalytic</note>
    </ligand>
</feature>
<feature type="binding site" evidence="1">
    <location>
        <position position="252"/>
    </location>
    <ligand>
        <name>a divalent metal cation</name>
        <dbReference type="ChEBI" id="CHEBI:60240"/>
        <label>2</label>
        <note>catalytic</note>
    </ligand>
</feature>
<feature type="binding site" evidence="1">
    <location>
        <position position="259"/>
    </location>
    <ligand>
        <name>substrate</name>
    </ligand>
</feature>
<feature type="binding site" evidence="1">
    <location>
        <position position="284"/>
    </location>
    <ligand>
        <name>a divalent metal cation</name>
        <dbReference type="ChEBI" id="CHEBI:60240"/>
        <label>2</label>
        <note>catalytic</note>
    </ligand>
</feature>
<feature type="binding site" evidence="1">
    <location>
        <position position="315"/>
    </location>
    <ligand>
        <name>a divalent metal cation</name>
        <dbReference type="ChEBI" id="CHEBI:60240"/>
        <label>1</label>
    </ligand>
</feature>
<feature type="binding site" evidence="1">
    <location>
        <position position="315"/>
    </location>
    <ligand>
        <name>a divalent metal cation</name>
        <dbReference type="ChEBI" id="CHEBI:60240"/>
        <label>2</label>
        <note>catalytic</note>
    </ligand>
</feature>
<feature type="sequence variant" id="VAR_050273" description="In dbSNP:rs10497377." evidence="3">
    <original>G</original>
    <variation>V</variation>
    <location>
        <position position="14"/>
    </location>
</feature>
<dbReference type="EC" id="3.4.11.18" evidence="1"/>
<dbReference type="EMBL" id="AY374142">
    <property type="protein sequence ID" value="AAR27795.1"/>
    <property type="molecule type" value="mRNA"/>
</dbReference>
<dbReference type="EMBL" id="DQ005576">
    <property type="protein sequence ID" value="AAY55948.1"/>
    <property type="status" value="ALT_INIT"/>
    <property type="molecule type" value="mRNA"/>
</dbReference>
<dbReference type="EMBL" id="CH471058">
    <property type="protein sequence ID" value="EAX11190.1"/>
    <property type="molecule type" value="Genomic_DNA"/>
</dbReference>
<dbReference type="EMBL" id="BC113644">
    <property type="protein sequence ID" value="AAI13645.1"/>
    <property type="molecule type" value="mRNA"/>
</dbReference>
<dbReference type="CCDS" id="CCDS2246.1"/>
<dbReference type="RefSeq" id="NP_001309207.1">
    <property type="nucleotide sequence ID" value="NM_001322278.1"/>
</dbReference>
<dbReference type="RefSeq" id="NP_001309208.1">
    <property type="nucleotide sequence ID" value="NM_001322279.1"/>
</dbReference>
<dbReference type="RefSeq" id="NP_954697.1">
    <property type="nucleotide sequence ID" value="NM_199227.3"/>
</dbReference>
<dbReference type="PDB" id="8KHM">
    <property type="method" value="X-ray"/>
    <property type="resolution" value="1.39 A"/>
    <property type="chains" value="A=44-335"/>
</dbReference>
<dbReference type="PDB" id="8KHN">
    <property type="method" value="X-ray"/>
    <property type="resolution" value="1.51 A"/>
    <property type="chains" value="A=44-335"/>
</dbReference>
<dbReference type="PDB" id="8KHO">
    <property type="method" value="X-ray"/>
    <property type="resolution" value="1.45 A"/>
    <property type="chains" value="A=44-335"/>
</dbReference>
<dbReference type="PDBsum" id="8KHM"/>
<dbReference type="PDBsum" id="8KHN"/>
<dbReference type="PDBsum" id="8KHO"/>
<dbReference type="SMR" id="Q6UB28"/>
<dbReference type="BioGRID" id="129008">
    <property type="interactions" value="14"/>
</dbReference>
<dbReference type="FunCoup" id="Q6UB28">
    <property type="interactions" value="435"/>
</dbReference>
<dbReference type="IntAct" id="Q6UB28">
    <property type="interactions" value="9"/>
</dbReference>
<dbReference type="STRING" id="9606.ENSP00000315152"/>
<dbReference type="ChEMBL" id="CHEMBL3831223"/>
<dbReference type="MEROPS" id="M24.028"/>
<dbReference type="iPTMnet" id="Q6UB28"/>
<dbReference type="PhosphoSitePlus" id="Q6UB28"/>
<dbReference type="BioMuta" id="METAP1D"/>
<dbReference type="DMDM" id="74710242"/>
<dbReference type="jPOST" id="Q6UB28"/>
<dbReference type="MassIVE" id="Q6UB28"/>
<dbReference type="PaxDb" id="9606-ENSP00000315152"/>
<dbReference type="PeptideAtlas" id="Q6UB28"/>
<dbReference type="ProteomicsDB" id="67401"/>
<dbReference type="Pumba" id="Q6UB28"/>
<dbReference type="Antibodypedia" id="33857">
    <property type="antibodies" value="113 antibodies from 19 providers"/>
</dbReference>
<dbReference type="DNASU" id="254042"/>
<dbReference type="Ensembl" id="ENST00000315796.5">
    <property type="protein sequence ID" value="ENSP00000315152.4"/>
    <property type="gene ID" value="ENSG00000172878.14"/>
</dbReference>
<dbReference type="Ensembl" id="ENST00000709703.1">
    <property type="protein sequence ID" value="ENSP00000517833.1"/>
    <property type="gene ID" value="ENSG00000292097.1"/>
</dbReference>
<dbReference type="GeneID" id="254042"/>
<dbReference type="KEGG" id="hsa:254042"/>
<dbReference type="MANE-Select" id="ENST00000315796.5">
    <property type="protein sequence ID" value="ENSP00000315152.4"/>
    <property type="RefSeq nucleotide sequence ID" value="NM_199227.3"/>
    <property type="RefSeq protein sequence ID" value="NP_954697.1"/>
</dbReference>
<dbReference type="UCSC" id="uc002uhk.4">
    <property type="organism name" value="human"/>
</dbReference>
<dbReference type="AGR" id="HGNC:32583"/>
<dbReference type="CTD" id="254042"/>
<dbReference type="DisGeNET" id="254042"/>
<dbReference type="GeneCards" id="METAP1D"/>
<dbReference type="HGNC" id="HGNC:32583">
    <property type="gene designation" value="METAP1D"/>
</dbReference>
<dbReference type="HPA" id="ENSG00000172878">
    <property type="expression patterns" value="Low tissue specificity"/>
</dbReference>
<dbReference type="MIM" id="610267">
    <property type="type" value="gene"/>
</dbReference>
<dbReference type="neXtProt" id="NX_Q6UB28"/>
<dbReference type="OpenTargets" id="ENSG00000172878"/>
<dbReference type="VEuPathDB" id="HostDB:ENSG00000172878"/>
<dbReference type="eggNOG" id="KOG2738">
    <property type="taxonomic scope" value="Eukaryota"/>
</dbReference>
<dbReference type="GeneTree" id="ENSGT00940000157735"/>
<dbReference type="HOGENOM" id="CLU_015857_1_1_1"/>
<dbReference type="InParanoid" id="Q6UB28"/>
<dbReference type="OMA" id="RGAESCY"/>
<dbReference type="OrthoDB" id="3209743at2759"/>
<dbReference type="PAN-GO" id="Q6UB28">
    <property type="GO annotations" value="2 GO annotations based on evolutionary models"/>
</dbReference>
<dbReference type="PhylomeDB" id="Q6UB28"/>
<dbReference type="TreeFam" id="TF325318"/>
<dbReference type="BRENDA" id="3.4.11.18">
    <property type="organism ID" value="2681"/>
</dbReference>
<dbReference type="PathwayCommons" id="Q6UB28"/>
<dbReference type="SABIO-RK" id="Q6UB28"/>
<dbReference type="SignaLink" id="Q6UB28"/>
<dbReference type="BioGRID-ORCS" id="254042">
    <property type="hits" value="19 hits in 1166 CRISPR screens"/>
</dbReference>
<dbReference type="CD-CODE" id="91857CE7">
    <property type="entry name" value="Nucleolus"/>
</dbReference>
<dbReference type="ChiTaRS" id="METAP1D">
    <property type="organism name" value="human"/>
</dbReference>
<dbReference type="GenomeRNAi" id="254042"/>
<dbReference type="Pharos" id="Q6UB28">
    <property type="development level" value="Tbio"/>
</dbReference>
<dbReference type="PRO" id="PR:Q6UB28"/>
<dbReference type="Proteomes" id="UP000005640">
    <property type="component" value="Chromosome 2"/>
</dbReference>
<dbReference type="RNAct" id="Q6UB28">
    <property type="molecule type" value="protein"/>
</dbReference>
<dbReference type="Bgee" id="ENSG00000172878">
    <property type="expression patterns" value="Expressed in oviduct epithelium and 154 other cell types or tissues"/>
</dbReference>
<dbReference type="GO" id="GO:0005739">
    <property type="term" value="C:mitochondrion"/>
    <property type="evidence" value="ECO:0000314"/>
    <property type="project" value="HGNC-UCL"/>
</dbReference>
<dbReference type="GO" id="GO:0004177">
    <property type="term" value="F:aminopeptidase activity"/>
    <property type="evidence" value="ECO:0000304"/>
    <property type="project" value="UniProtKB"/>
</dbReference>
<dbReference type="GO" id="GO:0004239">
    <property type="term" value="F:initiator methionyl aminopeptidase activity"/>
    <property type="evidence" value="ECO:0007669"/>
    <property type="project" value="UniProtKB-UniRule"/>
</dbReference>
<dbReference type="GO" id="GO:0046872">
    <property type="term" value="F:metal ion binding"/>
    <property type="evidence" value="ECO:0007669"/>
    <property type="project" value="UniProtKB-UniRule"/>
</dbReference>
<dbReference type="GO" id="GO:0070006">
    <property type="term" value="F:metalloaminopeptidase activity"/>
    <property type="evidence" value="ECO:0000318"/>
    <property type="project" value="GO_Central"/>
</dbReference>
<dbReference type="GO" id="GO:0008235">
    <property type="term" value="F:metalloexopeptidase activity"/>
    <property type="evidence" value="ECO:0000304"/>
    <property type="project" value="UniProtKB"/>
</dbReference>
<dbReference type="GO" id="GO:0043687">
    <property type="term" value="P:post-translational protein modification"/>
    <property type="evidence" value="ECO:0000314"/>
    <property type="project" value="HGNC-UCL"/>
</dbReference>
<dbReference type="GO" id="GO:0006508">
    <property type="term" value="P:proteolysis"/>
    <property type="evidence" value="ECO:0007669"/>
    <property type="project" value="UniProtKB-KW"/>
</dbReference>
<dbReference type="CDD" id="cd01086">
    <property type="entry name" value="MetAP1"/>
    <property type="match status" value="1"/>
</dbReference>
<dbReference type="FunFam" id="3.90.230.10:FF:000011">
    <property type="entry name" value="Methionine aminopeptidase"/>
    <property type="match status" value="1"/>
</dbReference>
<dbReference type="Gene3D" id="3.90.230.10">
    <property type="entry name" value="Creatinase/methionine aminopeptidase superfamily"/>
    <property type="match status" value="1"/>
</dbReference>
<dbReference type="HAMAP" id="MF_01974">
    <property type="entry name" value="MetAP_1"/>
    <property type="match status" value="1"/>
</dbReference>
<dbReference type="InterPro" id="IPR036005">
    <property type="entry name" value="Creatinase/aminopeptidase-like"/>
</dbReference>
<dbReference type="InterPro" id="IPR000994">
    <property type="entry name" value="Pept_M24"/>
</dbReference>
<dbReference type="InterPro" id="IPR001714">
    <property type="entry name" value="Pept_M24_MAP"/>
</dbReference>
<dbReference type="InterPro" id="IPR002467">
    <property type="entry name" value="Pept_M24A_MAP1"/>
</dbReference>
<dbReference type="NCBIfam" id="TIGR00500">
    <property type="entry name" value="met_pdase_I"/>
    <property type="match status" value="1"/>
</dbReference>
<dbReference type="PANTHER" id="PTHR43330">
    <property type="entry name" value="METHIONINE AMINOPEPTIDASE"/>
    <property type="match status" value="1"/>
</dbReference>
<dbReference type="PANTHER" id="PTHR43330:SF8">
    <property type="entry name" value="METHIONINE AMINOPEPTIDASE 1D, MITOCHONDRIAL"/>
    <property type="match status" value="1"/>
</dbReference>
<dbReference type="Pfam" id="PF00557">
    <property type="entry name" value="Peptidase_M24"/>
    <property type="match status" value="1"/>
</dbReference>
<dbReference type="PRINTS" id="PR00599">
    <property type="entry name" value="MAPEPTIDASE"/>
</dbReference>
<dbReference type="SUPFAM" id="SSF55920">
    <property type="entry name" value="Creatinase/aminopeptidase"/>
    <property type="match status" value="1"/>
</dbReference>
<dbReference type="PROSITE" id="PS00680">
    <property type="entry name" value="MAP_1"/>
    <property type="match status" value="1"/>
</dbReference>